<evidence type="ECO:0000255" key="1">
    <source>
        <dbReference type="HAMAP-Rule" id="MF_01186"/>
    </source>
</evidence>
<evidence type="ECO:0000256" key="2">
    <source>
        <dbReference type="SAM" id="MobiDB-lite"/>
    </source>
</evidence>
<accession>B4TPX4</accession>
<dbReference type="EMBL" id="CP001127">
    <property type="protein sequence ID" value="ACF91886.1"/>
    <property type="molecule type" value="Genomic_DNA"/>
</dbReference>
<dbReference type="RefSeq" id="WP_001269950.1">
    <property type="nucleotide sequence ID" value="NC_011094.1"/>
</dbReference>
<dbReference type="SMR" id="B4TPX4"/>
<dbReference type="KEGG" id="sew:SeSA_A0807"/>
<dbReference type="HOGENOM" id="CLU_103309_1_1_6"/>
<dbReference type="Proteomes" id="UP000001865">
    <property type="component" value="Chromosome"/>
</dbReference>
<dbReference type="GO" id="GO:0009279">
    <property type="term" value="C:cell outer membrane"/>
    <property type="evidence" value="ECO:0007669"/>
    <property type="project" value="UniProtKB-SubCell"/>
</dbReference>
<dbReference type="GO" id="GO:1990351">
    <property type="term" value="C:transporter complex"/>
    <property type="evidence" value="ECO:0007669"/>
    <property type="project" value="TreeGrafter"/>
</dbReference>
<dbReference type="GO" id="GO:0001530">
    <property type="term" value="F:lipopolysaccharide binding"/>
    <property type="evidence" value="ECO:0007669"/>
    <property type="project" value="TreeGrafter"/>
</dbReference>
<dbReference type="GO" id="GO:0043165">
    <property type="term" value="P:Gram-negative-bacterium-type cell outer membrane assembly"/>
    <property type="evidence" value="ECO:0007669"/>
    <property type="project" value="UniProtKB-UniRule"/>
</dbReference>
<dbReference type="GO" id="GO:0015920">
    <property type="term" value="P:lipopolysaccharide transport"/>
    <property type="evidence" value="ECO:0007669"/>
    <property type="project" value="TreeGrafter"/>
</dbReference>
<dbReference type="FunFam" id="3.30.160.150:FF:000001">
    <property type="entry name" value="LPS-assembly lipoprotein LptE"/>
    <property type="match status" value="1"/>
</dbReference>
<dbReference type="Gene3D" id="3.30.160.150">
    <property type="entry name" value="Lipoprotein like domain"/>
    <property type="match status" value="1"/>
</dbReference>
<dbReference type="HAMAP" id="MF_01186">
    <property type="entry name" value="LPS_assembly_LptE"/>
    <property type="match status" value="1"/>
</dbReference>
<dbReference type="InterPro" id="IPR007485">
    <property type="entry name" value="LPS_assembly_LptE"/>
</dbReference>
<dbReference type="NCBIfam" id="NF008062">
    <property type="entry name" value="PRK10796.1"/>
    <property type="match status" value="1"/>
</dbReference>
<dbReference type="PANTHER" id="PTHR38098">
    <property type="entry name" value="LPS-ASSEMBLY LIPOPROTEIN LPTE"/>
    <property type="match status" value="1"/>
</dbReference>
<dbReference type="PANTHER" id="PTHR38098:SF1">
    <property type="entry name" value="LPS-ASSEMBLY LIPOPROTEIN LPTE"/>
    <property type="match status" value="1"/>
</dbReference>
<dbReference type="Pfam" id="PF04390">
    <property type="entry name" value="LptE"/>
    <property type="match status" value="1"/>
</dbReference>
<dbReference type="PROSITE" id="PS51257">
    <property type="entry name" value="PROKAR_LIPOPROTEIN"/>
    <property type="match status" value="1"/>
</dbReference>
<organism>
    <name type="scientific">Salmonella schwarzengrund (strain CVM19633)</name>
    <dbReference type="NCBI Taxonomy" id="439843"/>
    <lineage>
        <taxon>Bacteria</taxon>
        <taxon>Pseudomonadati</taxon>
        <taxon>Pseudomonadota</taxon>
        <taxon>Gammaproteobacteria</taxon>
        <taxon>Enterobacterales</taxon>
        <taxon>Enterobacteriaceae</taxon>
        <taxon>Salmonella</taxon>
    </lineage>
</organism>
<reference key="1">
    <citation type="journal article" date="2011" name="J. Bacteriol.">
        <title>Comparative genomics of 28 Salmonella enterica isolates: evidence for CRISPR-mediated adaptive sublineage evolution.</title>
        <authorList>
            <person name="Fricke W.F."/>
            <person name="Mammel M.K."/>
            <person name="McDermott P.F."/>
            <person name="Tartera C."/>
            <person name="White D.G."/>
            <person name="Leclerc J.E."/>
            <person name="Ravel J."/>
            <person name="Cebula T.A."/>
        </authorList>
    </citation>
    <scope>NUCLEOTIDE SEQUENCE [LARGE SCALE GENOMIC DNA]</scope>
    <source>
        <strain>CVM19633</strain>
    </source>
</reference>
<comment type="function">
    <text evidence="1">Together with LptD, is involved in the assembly of lipopolysaccharide (LPS) at the surface of the outer membrane. Required for the proper assembly of LptD. Binds LPS and may serve as the LPS recognition site at the outer membrane.</text>
</comment>
<comment type="subunit">
    <text evidence="1">Component of the lipopolysaccharide transport and assembly complex. Interacts with LptD.</text>
</comment>
<comment type="subcellular location">
    <subcellularLocation>
        <location evidence="1">Cell outer membrane</location>
        <topology evidence="1">Lipid-anchor</topology>
    </subcellularLocation>
</comment>
<comment type="similarity">
    <text evidence="1">Belongs to the LptE lipoprotein family.</text>
</comment>
<name>LPTE_SALSV</name>
<gene>
    <name evidence="1" type="primary">lptE</name>
    <name type="synonym">rlpB</name>
    <name type="ordered locus">SeSA_A0807</name>
</gene>
<feature type="signal peptide" evidence="1">
    <location>
        <begin position="1"/>
        <end position="18"/>
    </location>
</feature>
<feature type="chain" id="PRO_1000138281" description="LPS-assembly lipoprotein LptE">
    <location>
        <begin position="19"/>
        <end position="196"/>
    </location>
</feature>
<feature type="region of interest" description="Disordered" evidence="2">
    <location>
        <begin position="171"/>
        <end position="196"/>
    </location>
</feature>
<feature type="lipid moiety-binding region" description="N-palmitoyl cysteine" evidence="1">
    <location>
        <position position="19"/>
    </location>
</feature>
<feature type="lipid moiety-binding region" description="S-diacylglycerol cysteine" evidence="1">
    <location>
        <position position="19"/>
    </location>
</feature>
<sequence>MRYLVTLLLSLAVLVTAGCGWHLRSTTQVPASMKTMILDSGDPNGPLSRAVRNQLRLNNVNLLDKDTTRKDVPSLRLGTVTISQDTASVFQDGQTAEYQMVMTVNASVLIPGHDIYPISTKVYRSFFDNPQMALAKDNEQAMIVQEMYDKAAEQLIRKLTSVRAADIQATKEEATADNETAAPASTPARVSTTLSN</sequence>
<keyword id="KW-0998">Cell outer membrane</keyword>
<keyword id="KW-0449">Lipoprotein</keyword>
<keyword id="KW-0472">Membrane</keyword>
<keyword id="KW-0564">Palmitate</keyword>
<keyword id="KW-0732">Signal</keyword>
<proteinExistence type="inferred from homology"/>
<protein>
    <recommendedName>
        <fullName evidence="1">LPS-assembly lipoprotein LptE</fullName>
    </recommendedName>
</protein>